<accession>P0AD69</accession>
<accession>P04286</accession>
<protein>
    <recommendedName>
        <fullName evidence="2">Peptidoglycan D,D-transpeptidase FtsI</fullName>
        <ecNumber evidence="2">3.4.16.4</ecNumber>
    </recommendedName>
    <alternativeName>
        <fullName evidence="2">Penicillin-binding protein 3</fullName>
        <shortName evidence="2">PBP-3</shortName>
    </alternativeName>
</protein>
<organism>
    <name type="scientific">Escherichia coli O157:H7</name>
    <dbReference type="NCBI Taxonomy" id="83334"/>
    <lineage>
        <taxon>Bacteria</taxon>
        <taxon>Pseudomonadati</taxon>
        <taxon>Pseudomonadota</taxon>
        <taxon>Gammaproteobacteria</taxon>
        <taxon>Enterobacterales</taxon>
        <taxon>Enterobacteriaceae</taxon>
        <taxon>Escherichia</taxon>
    </lineage>
</organism>
<gene>
    <name evidence="2" type="primary">ftsI</name>
    <name type="synonym">pbpB</name>
    <name type="ordered locus">Z0094</name>
    <name type="ordered locus">ECs0088</name>
</gene>
<comment type="function">
    <text evidence="2">Catalyzes cross-linking of the peptidoglycan cell wall at the division septum.</text>
</comment>
<comment type="catalytic activity">
    <reaction evidence="2">
        <text>Preferential cleavage: (Ac)2-L-Lys-D-Ala-|-D-Ala. Also transpeptidation of peptidyl-alanyl moieties that are N-acyl substituents of D-alanine.</text>
        <dbReference type="EC" id="3.4.16.4"/>
    </reaction>
</comment>
<comment type="pathway">
    <text evidence="2">Cell wall biogenesis; peptidoglycan biosynthesis.</text>
</comment>
<comment type="subcellular location">
    <subcellularLocation>
        <location evidence="2">Cell inner membrane</location>
        <topology evidence="2">Single-pass membrane protein</topology>
    </subcellularLocation>
</comment>
<comment type="similarity">
    <text evidence="2">Belongs to the transpeptidase family. FtsI subfamily.</text>
</comment>
<reference key="1">
    <citation type="journal article" date="2001" name="Nature">
        <title>Genome sequence of enterohaemorrhagic Escherichia coli O157:H7.</title>
        <authorList>
            <person name="Perna N.T."/>
            <person name="Plunkett G. III"/>
            <person name="Burland V."/>
            <person name="Mau B."/>
            <person name="Glasner J.D."/>
            <person name="Rose D.J."/>
            <person name="Mayhew G.F."/>
            <person name="Evans P.S."/>
            <person name="Gregor J."/>
            <person name="Kirkpatrick H.A."/>
            <person name="Posfai G."/>
            <person name="Hackett J."/>
            <person name="Klink S."/>
            <person name="Boutin A."/>
            <person name="Shao Y."/>
            <person name="Miller L."/>
            <person name="Grotbeck E.J."/>
            <person name="Davis N.W."/>
            <person name="Lim A."/>
            <person name="Dimalanta E.T."/>
            <person name="Potamousis K."/>
            <person name="Apodaca J."/>
            <person name="Anantharaman T.S."/>
            <person name="Lin J."/>
            <person name="Yen G."/>
            <person name="Schwartz D.C."/>
            <person name="Welch R.A."/>
            <person name="Blattner F.R."/>
        </authorList>
    </citation>
    <scope>NUCLEOTIDE SEQUENCE [LARGE SCALE GENOMIC DNA]</scope>
    <source>
        <strain>O157:H7 / EDL933 / ATCC 700927 / EHEC</strain>
    </source>
</reference>
<reference key="2">
    <citation type="journal article" date="2001" name="DNA Res.">
        <title>Complete genome sequence of enterohemorrhagic Escherichia coli O157:H7 and genomic comparison with a laboratory strain K-12.</title>
        <authorList>
            <person name="Hayashi T."/>
            <person name="Makino K."/>
            <person name="Ohnishi M."/>
            <person name="Kurokawa K."/>
            <person name="Ishii K."/>
            <person name="Yokoyama K."/>
            <person name="Han C.-G."/>
            <person name="Ohtsubo E."/>
            <person name="Nakayama K."/>
            <person name="Murata T."/>
            <person name="Tanaka M."/>
            <person name="Tobe T."/>
            <person name="Iida T."/>
            <person name="Takami H."/>
            <person name="Honda T."/>
            <person name="Sasakawa C."/>
            <person name="Ogasawara N."/>
            <person name="Yasunaga T."/>
            <person name="Kuhara S."/>
            <person name="Shiba T."/>
            <person name="Hattori M."/>
            <person name="Shinagawa H."/>
        </authorList>
    </citation>
    <scope>NUCLEOTIDE SEQUENCE [LARGE SCALE GENOMIC DNA]</scope>
    <source>
        <strain>O157:H7 / Sakai / RIMD 0509952 / EHEC</strain>
    </source>
</reference>
<proteinExistence type="inferred from homology"/>
<sequence length="588" mass="63877">MKAAAKTQKPKRQEEHANFISWRFALLCGCILLALAFLLGRVAWLQVISPDMLVKEGDMRSLRVQQVSTSRGMITDRSGRPLAVSVPVKAIWADPKEVHDAGGISVGDRWKALANALNIPLDQLSARINANPKGRFIYLARQVNPDMADYIKKLKLPGIHLREESRRYYPSGEVTAHLIGFTNVDSQGIEGVEKSFDKWLTGQPGERIVRKDRYGRVIEDISSTDSQAAHNLALSIDERLQALVYRELNNAVAFNKAESGSAVLVDVNTGEVLAMANSPSYNPNNLSGTPKEAMRNRTITDVFEPGSTVKPMVVMTALQRGVVRENSVLNTIPYRINGHEIKDVARYSELTLTGVLQKSSNVGVSKLALAMPSSALVDTYSRFGLGKATNLGLVGERSGLYPQKQRWSDIERATFSFGYGLMVTPLQLARVYATIGSYGIYRPLSITKVDPPVPGERVFPESIVRTVVHMMESVALPGGGGVKAAIKGYRIAIKTGTAKKVGPDGRYINKYIAYTAGVAPASQPRFALVVVINDPQAGKYYGGAVSAPVFGAIMGGVLRTMNIEPDALTTGDKNEFVINQGEGTGGRS</sequence>
<feature type="chain" id="PRO_0000043363" description="Peptidoglycan D,D-transpeptidase FtsI">
    <location>
        <begin position="1"/>
        <end position="577"/>
    </location>
</feature>
<feature type="propeptide" id="PRO_0000043364" evidence="1">
    <location>
        <begin position="578"/>
        <end position="588"/>
    </location>
</feature>
<feature type="transmembrane region" description="Helical" evidence="2">
    <location>
        <begin position="19"/>
        <end position="39"/>
    </location>
</feature>
<feature type="active site" description="Acyl-ester intermediate" evidence="2">
    <location>
        <position position="307"/>
    </location>
</feature>
<name>FTSI_ECO57</name>
<keyword id="KW-0121">Carboxypeptidase</keyword>
<keyword id="KW-0131">Cell cycle</keyword>
<keyword id="KW-0132">Cell division</keyword>
<keyword id="KW-0997">Cell inner membrane</keyword>
<keyword id="KW-1003">Cell membrane</keyword>
<keyword id="KW-0133">Cell shape</keyword>
<keyword id="KW-0961">Cell wall biogenesis/degradation</keyword>
<keyword id="KW-0378">Hydrolase</keyword>
<keyword id="KW-0472">Membrane</keyword>
<keyword id="KW-0573">Peptidoglycan synthesis</keyword>
<keyword id="KW-0645">Protease</keyword>
<keyword id="KW-1185">Reference proteome</keyword>
<keyword id="KW-0717">Septation</keyword>
<keyword id="KW-0812">Transmembrane</keyword>
<keyword id="KW-1133">Transmembrane helix</keyword>
<evidence type="ECO:0000250" key="1">
    <source>
        <dbReference type="UniProtKB" id="P0AD68"/>
    </source>
</evidence>
<evidence type="ECO:0000255" key="2">
    <source>
        <dbReference type="HAMAP-Rule" id="MF_02080"/>
    </source>
</evidence>
<dbReference type="EC" id="3.4.16.4" evidence="2"/>
<dbReference type="EMBL" id="AE005174">
    <property type="protein sequence ID" value="AAG54388.1"/>
    <property type="molecule type" value="Genomic_DNA"/>
</dbReference>
<dbReference type="EMBL" id="BA000007">
    <property type="protein sequence ID" value="BAB33511.1"/>
    <property type="molecule type" value="Genomic_DNA"/>
</dbReference>
<dbReference type="PIR" id="H85490">
    <property type="entry name" value="H85490"/>
</dbReference>
<dbReference type="PIR" id="H90639">
    <property type="entry name" value="H90639"/>
</dbReference>
<dbReference type="RefSeq" id="NP_308115.1">
    <property type="nucleotide sequence ID" value="NC_002695.1"/>
</dbReference>
<dbReference type="RefSeq" id="WP_000642196.1">
    <property type="nucleotide sequence ID" value="NZ_VOAI01000002.1"/>
</dbReference>
<dbReference type="SMR" id="P0AD69"/>
<dbReference type="STRING" id="155864.Z0094"/>
<dbReference type="DrugBank" id="DB05659">
    <property type="generic name" value="Faropenem medoxomil"/>
</dbReference>
<dbReference type="GeneID" id="75202099"/>
<dbReference type="GeneID" id="913535"/>
<dbReference type="KEGG" id="ece:Z0094"/>
<dbReference type="KEGG" id="ecs:ECs_0088"/>
<dbReference type="PATRIC" id="fig|386585.9.peg.188"/>
<dbReference type="eggNOG" id="COG0768">
    <property type="taxonomic scope" value="Bacteria"/>
</dbReference>
<dbReference type="HOGENOM" id="CLU_009289_6_2_6"/>
<dbReference type="OMA" id="TVYCAIQ"/>
<dbReference type="UniPathway" id="UPA00219"/>
<dbReference type="Proteomes" id="UP000000558">
    <property type="component" value="Chromosome"/>
</dbReference>
<dbReference type="Proteomes" id="UP000002519">
    <property type="component" value="Chromosome"/>
</dbReference>
<dbReference type="GO" id="GO:0005886">
    <property type="term" value="C:plasma membrane"/>
    <property type="evidence" value="ECO:0007669"/>
    <property type="project" value="UniProtKB-SubCell"/>
</dbReference>
<dbReference type="GO" id="GO:0008658">
    <property type="term" value="F:penicillin binding"/>
    <property type="evidence" value="ECO:0007669"/>
    <property type="project" value="InterPro"/>
</dbReference>
<dbReference type="GO" id="GO:0008955">
    <property type="term" value="F:peptidoglycan glycosyltransferase activity"/>
    <property type="evidence" value="ECO:0007669"/>
    <property type="project" value="InterPro"/>
</dbReference>
<dbReference type="GO" id="GO:0009002">
    <property type="term" value="F:serine-type D-Ala-D-Ala carboxypeptidase activity"/>
    <property type="evidence" value="ECO:0007669"/>
    <property type="project" value="UniProtKB-UniRule"/>
</dbReference>
<dbReference type="GO" id="GO:0071555">
    <property type="term" value="P:cell wall organization"/>
    <property type="evidence" value="ECO:0007669"/>
    <property type="project" value="UniProtKB-KW"/>
</dbReference>
<dbReference type="GO" id="GO:0000917">
    <property type="term" value="P:division septum assembly"/>
    <property type="evidence" value="ECO:0007669"/>
    <property type="project" value="UniProtKB-KW"/>
</dbReference>
<dbReference type="GO" id="GO:0043093">
    <property type="term" value="P:FtsZ-dependent cytokinesis"/>
    <property type="evidence" value="ECO:0007669"/>
    <property type="project" value="UniProtKB-UniRule"/>
</dbReference>
<dbReference type="GO" id="GO:0009252">
    <property type="term" value="P:peptidoglycan biosynthetic process"/>
    <property type="evidence" value="ECO:0007669"/>
    <property type="project" value="UniProtKB-UniRule"/>
</dbReference>
<dbReference type="GO" id="GO:0006508">
    <property type="term" value="P:proteolysis"/>
    <property type="evidence" value="ECO:0007669"/>
    <property type="project" value="UniProtKB-KW"/>
</dbReference>
<dbReference type="GO" id="GO:0008360">
    <property type="term" value="P:regulation of cell shape"/>
    <property type="evidence" value="ECO:0007669"/>
    <property type="project" value="UniProtKB-KW"/>
</dbReference>
<dbReference type="FunFam" id="1.10.150.770:FF:000001">
    <property type="entry name" value="Peptidoglycan D,D-transpeptidase FtsI"/>
    <property type="match status" value="1"/>
</dbReference>
<dbReference type="FunFam" id="3.40.710.10:FF:000003">
    <property type="entry name" value="Peptidoglycan D,D-transpeptidase FtsI"/>
    <property type="match status" value="1"/>
</dbReference>
<dbReference type="FunFam" id="3.90.1310.10:FF:000003">
    <property type="entry name" value="Peptidoglycan D,D-transpeptidase FtsI"/>
    <property type="match status" value="1"/>
</dbReference>
<dbReference type="Gene3D" id="1.10.150.770">
    <property type="match status" value="1"/>
</dbReference>
<dbReference type="Gene3D" id="3.30.450.330">
    <property type="match status" value="1"/>
</dbReference>
<dbReference type="Gene3D" id="3.40.710.10">
    <property type="entry name" value="DD-peptidase/beta-lactamase superfamily"/>
    <property type="match status" value="1"/>
</dbReference>
<dbReference type="Gene3D" id="3.90.1310.10">
    <property type="entry name" value="Penicillin-binding protein 2a (Domain 2)"/>
    <property type="match status" value="1"/>
</dbReference>
<dbReference type="HAMAP" id="MF_02080">
    <property type="entry name" value="FtsI_transpept"/>
    <property type="match status" value="1"/>
</dbReference>
<dbReference type="InterPro" id="IPR050515">
    <property type="entry name" value="Bact_Transpept/Beta-Lactamase"/>
</dbReference>
<dbReference type="InterPro" id="IPR012338">
    <property type="entry name" value="Beta-lactam/transpept-like"/>
</dbReference>
<dbReference type="InterPro" id="IPR037532">
    <property type="entry name" value="FtsI_transpept"/>
</dbReference>
<dbReference type="InterPro" id="IPR005311">
    <property type="entry name" value="PBP_dimer"/>
</dbReference>
<dbReference type="InterPro" id="IPR036138">
    <property type="entry name" value="PBP_dimer_sf"/>
</dbReference>
<dbReference type="InterPro" id="IPR001460">
    <property type="entry name" value="PCN-bd_Tpept"/>
</dbReference>
<dbReference type="NCBIfam" id="NF011685">
    <property type="entry name" value="PRK15105.1"/>
    <property type="match status" value="1"/>
</dbReference>
<dbReference type="PANTHER" id="PTHR30627">
    <property type="entry name" value="PEPTIDOGLYCAN D,D-TRANSPEPTIDASE"/>
    <property type="match status" value="1"/>
</dbReference>
<dbReference type="PANTHER" id="PTHR30627:SF1">
    <property type="entry name" value="PEPTIDOGLYCAN D,D-TRANSPEPTIDASE FTSI"/>
    <property type="match status" value="1"/>
</dbReference>
<dbReference type="Pfam" id="PF03717">
    <property type="entry name" value="PBP_dimer"/>
    <property type="match status" value="1"/>
</dbReference>
<dbReference type="Pfam" id="PF00905">
    <property type="entry name" value="Transpeptidase"/>
    <property type="match status" value="1"/>
</dbReference>
<dbReference type="SUPFAM" id="SSF56601">
    <property type="entry name" value="beta-lactamase/transpeptidase-like"/>
    <property type="match status" value="1"/>
</dbReference>
<dbReference type="SUPFAM" id="SSF56519">
    <property type="entry name" value="Penicillin binding protein dimerisation domain"/>
    <property type="match status" value="1"/>
</dbReference>